<keyword id="KW-0694">RNA-binding</keyword>
<keyword id="KW-0804">Transcription</keyword>
<keyword id="KW-0889">Transcription antitermination</keyword>
<keyword id="KW-0805">Transcription regulation</keyword>
<organism>
    <name type="scientific">Marinomonas sp. (strain MWYL1)</name>
    <dbReference type="NCBI Taxonomy" id="400668"/>
    <lineage>
        <taxon>Bacteria</taxon>
        <taxon>Pseudomonadati</taxon>
        <taxon>Pseudomonadota</taxon>
        <taxon>Gammaproteobacteria</taxon>
        <taxon>Oceanospirillales</taxon>
        <taxon>Oceanospirillaceae</taxon>
        <taxon>Marinomonas</taxon>
    </lineage>
</organism>
<dbReference type="EMBL" id="CP000749">
    <property type="protein sequence ID" value="ABR72945.1"/>
    <property type="molecule type" value="Genomic_DNA"/>
</dbReference>
<dbReference type="SMR" id="A6W2L6"/>
<dbReference type="STRING" id="400668.Mmwyl1_4049"/>
<dbReference type="KEGG" id="mmw:Mmwyl1_4049"/>
<dbReference type="eggNOG" id="COG0781">
    <property type="taxonomic scope" value="Bacteria"/>
</dbReference>
<dbReference type="HOGENOM" id="CLU_087843_4_1_6"/>
<dbReference type="OrthoDB" id="9789556at2"/>
<dbReference type="GO" id="GO:0005829">
    <property type="term" value="C:cytosol"/>
    <property type="evidence" value="ECO:0007669"/>
    <property type="project" value="TreeGrafter"/>
</dbReference>
<dbReference type="GO" id="GO:0003723">
    <property type="term" value="F:RNA binding"/>
    <property type="evidence" value="ECO:0007669"/>
    <property type="project" value="UniProtKB-UniRule"/>
</dbReference>
<dbReference type="GO" id="GO:0006353">
    <property type="term" value="P:DNA-templated transcription termination"/>
    <property type="evidence" value="ECO:0007669"/>
    <property type="project" value="UniProtKB-UniRule"/>
</dbReference>
<dbReference type="GO" id="GO:0031564">
    <property type="term" value="P:transcription antitermination"/>
    <property type="evidence" value="ECO:0007669"/>
    <property type="project" value="UniProtKB-KW"/>
</dbReference>
<dbReference type="Gene3D" id="1.10.940.10">
    <property type="entry name" value="NusB-like"/>
    <property type="match status" value="1"/>
</dbReference>
<dbReference type="HAMAP" id="MF_00073">
    <property type="entry name" value="NusB"/>
    <property type="match status" value="1"/>
</dbReference>
<dbReference type="InterPro" id="IPR035926">
    <property type="entry name" value="NusB-like_sf"/>
</dbReference>
<dbReference type="InterPro" id="IPR011605">
    <property type="entry name" value="NusB_fam"/>
</dbReference>
<dbReference type="InterPro" id="IPR006027">
    <property type="entry name" value="NusB_RsmB_TIM44"/>
</dbReference>
<dbReference type="NCBIfam" id="TIGR01951">
    <property type="entry name" value="nusB"/>
    <property type="match status" value="1"/>
</dbReference>
<dbReference type="PANTHER" id="PTHR11078:SF3">
    <property type="entry name" value="ANTITERMINATION NUSB DOMAIN-CONTAINING PROTEIN"/>
    <property type="match status" value="1"/>
</dbReference>
<dbReference type="PANTHER" id="PTHR11078">
    <property type="entry name" value="N UTILIZATION SUBSTANCE PROTEIN B-RELATED"/>
    <property type="match status" value="1"/>
</dbReference>
<dbReference type="Pfam" id="PF01029">
    <property type="entry name" value="NusB"/>
    <property type="match status" value="1"/>
</dbReference>
<dbReference type="SUPFAM" id="SSF48013">
    <property type="entry name" value="NusB-like"/>
    <property type="match status" value="1"/>
</dbReference>
<evidence type="ECO:0000255" key="1">
    <source>
        <dbReference type="HAMAP-Rule" id="MF_00073"/>
    </source>
</evidence>
<evidence type="ECO:0000256" key="2">
    <source>
        <dbReference type="SAM" id="MobiDB-lite"/>
    </source>
</evidence>
<name>NUSB_MARMS</name>
<protein>
    <recommendedName>
        <fullName evidence="1">Transcription antitermination protein NusB</fullName>
    </recommendedName>
    <alternativeName>
        <fullName evidence="1">Antitermination factor NusB</fullName>
    </alternativeName>
</protein>
<comment type="function">
    <text evidence="1">Involved in transcription antitermination. Required for transcription of ribosomal RNA (rRNA) genes. Binds specifically to the boxA antiterminator sequence of the ribosomal RNA (rrn) operons.</text>
</comment>
<comment type="similarity">
    <text evidence="1">Belongs to the NusB family.</text>
</comment>
<accession>A6W2L6</accession>
<gene>
    <name evidence="1" type="primary">nusB</name>
    <name type="ordered locus">Mmwyl1_4049</name>
</gene>
<feature type="chain" id="PRO_1000117055" description="Transcription antitermination protein NusB">
    <location>
        <begin position="1"/>
        <end position="174"/>
    </location>
</feature>
<feature type="region of interest" description="Disordered" evidence="2">
    <location>
        <begin position="1"/>
        <end position="29"/>
    </location>
</feature>
<feature type="compositionally biased region" description="Polar residues" evidence="2">
    <location>
        <begin position="1"/>
        <end position="11"/>
    </location>
</feature>
<reference key="1">
    <citation type="submission" date="2007-06" db="EMBL/GenBank/DDBJ databases">
        <title>Complete sequence of Marinomonas sp. MWYL1.</title>
        <authorList>
            <consortium name="US DOE Joint Genome Institute"/>
            <person name="Copeland A."/>
            <person name="Lucas S."/>
            <person name="Lapidus A."/>
            <person name="Barry K."/>
            <person name="Glavina del Rio T."/>
            <person name="Dalin E."/>
            <person name="Tice H."/>
            <person name="Pitluck S."/>
            <person name="Kiss H."/>
            <person name="Brettin T."/>
            <person name="Bruce D."/>
            <person name="Detter J.C."/>
            <person name="Han C."/>
            <person name="Schmutz J."/>
            <person name="Larimer F."/>
            <person name="Land M."/>
            <person name="Hauser L."/>
            <person name="Kyrpides N."/>
            <person name="Kim E."/>
            <person name="Johnston A.W.B."/>
            <person name="Todd J.D."/>
            <person name="Rogers R."/>
            <person name="Wexler M."/>
            <person name="Bond P.L."/>
            <person name="Li Y."/>
            <person name="Richardson P."/>
        </authorList>
    </citation>
    <scope>NUCLEOTIDE SEQUENCE [LARGE SCALE GENOMIC DNA]</scope>
    <source>
        <strain>MWYL1</strain>
    </source>
</reference>
<proteinExistence type="inferred from homology"/>
<sequence length="174" mass="19949">MSEVETTNDQTPAPKRKDKKPSRSQLRSASRRLALQAVYQWQMNKTAVSEIETQFVIDQDRDMDSCDKVYFRELLQGVTASAKKLDTLFEELLDRPLSELDPIELAVMRIGSYELSQRLDVPYRVAINESVELAKGFGATESHKYVNGILDKLAQRVRREEIAARREANKESNK</sequence>